<gene>
    <name evidence="1" type="primary">hisF</name>
    <name type="ordered locus">Gura_4053</name>
</gene>
<protein>
    <recommendedName>
        <fullName evidence="1">Imidazole glycerol phosphate synthase subunit HisF</fullName>
        <ecNumber evidence="1">4.3.2.10</ecNumber>
    </recommendedName>
    <alternativeName>
        <fullName evidence="1">IGP synthase cyclase subunit</fullName>
    </alternativeName>
    <alternativeName>
        <fullName evidence="1">IGP synthase subunit HisF</fullName>
    </alternativeName>
    <alternativeName>
        <fullName evidence="1">ImGP synthase subunit HisF</fullName>
        <shortName evidence="1">IGPS subunit HisF</shortName>
    </alternativeName>
</protein>
<dbReference type="EC" id="4.3.2.10" evidence="1"/>
<dbReference type="EMBL" id="CP000698">
    <property type="protein sequence ID" value="ABQ28197.1"/>
    <property type="molecule type" value="Genomic_DNA"/>
</dbReference>
<dbReference type="RefSeq" id="WP_011940834.1">
    <property type="nucleotide sequence ID" value="NC_009483.1"/>
</dbReference>
<dbReference type="SMR" id="A5G8S9"/>
<dbReference type="STRING" id="351605.Gura_4053"/>
<dbReference type="KEGG" id="gur:Gura_4053"/>
<dbReference type="HOGENOM" id="CLU_048577_4_0_7"/>
<dbReference type="OrthoDB" id="9807749at2"/>
<dbReference type="UniPathway" id="UPA00031">
    <property type="reaction ID" value="UER00010"/>
</dbReference>
<dbReference type="Proteomes" id="UP000006695">
    <property type="component" value="Chromosome"/>
</dbReference>
<dbReference type="GO" id="GO:0005737">
    <property type="term" value="C:cytoplasm"/>
    <property type="evidence" value="ECO:0007669"/>
    <property type="project" value="UniProtKB-SubCell"/>
</dbReference>
<dbReference type="GO" id="GO:0000107">
    <property type="term" value="F:imidazoleglycerol-phosphate synthase activity"/>
    <property type="evidence" value="ECO:0007669"/>
    <property type="project" value="UniProtKB-UniRule"/>
</dbReference>
<dbReference type="GO" id="GO:0016829">
    <property type="term" value="F:lyase activity"/>
    <property type="evidence" value="ECO:0007669"/>
    <property type="project" value="UniProtKB-KW"/>
</dbReference>
<dbReference type="GO" id="GO:0000105">
    <property type="term" value="P:L-histidine biosynthetic process"/>
    <property type="evidence" value="ECO:0007669"/>
    <property type="project" value="UniProtKB-UniRule"/>
</dbReference>
<dbReference type="CDD" id="cd04731">
    <property type="entry name" value="HisF"/>
    <property type="match status" value="1"/>
</dbReference>
<dbReference type="FunFam" id="3.20.20.70:FF:000006">
    <property type="entry name" value="Imidazole glycerol phosphate synthase subunit HisF"/>
    <property type="match status" value="1"/>
</dbReference>
<dbReference type="Gene3D" id="3.20.20.70">
    <property type="entry name" value="Aldolase class I"/>
    <property type="match status" value="1"/>
</dbReference>
<dbReference type="HAMAP" id="MF_01013">
    <property type="entry name" value="HisF"/>
    <property type="match status" value="1"/>
</dbReference>
<dbReference type="InterPro" id="IPR013785">
    <property type="entry name" value="Aldolase_TIM"/>
</dbReference>
<dbReference type="InterPro" id="IPR006062">
    <property type="entry name" value="His_biosynth"/>
</dbReference>
<dbReference type="InterPro" id="IPR004651">
    <property type="entry name" value="HisF"/>
</dbReference>
<dbReference type="InterPro" id="IPR050064">
    <property type="entry name" value="IGPS_HisA/HisF"/>
</dbReference>
<dbReference type="InterPro" id="IPR011060">
    <property type="entry name" value="RibuloseP-bd_barrel"/>
</dbReference>
<dbReference type="NCBIfam" id="TIGR00735">
    <property type="entry name" value="hisF"/>
    <property type="match status" value="1"/>
</dbReference>
<dbReference type="PANTHER" id="PTHR21235:SF2">
    <property type="entry name" value="IMIDAZOLE GLYCEROL PHOSPHATE SYNTHASE HISHF"/>
    <property type="match status" value="1"/>
</dbReference>
<dbReference type="PANTHER" id="PTHR21235">
    <property type="entry name" value="IMIDAZOLE GLYCEROL PHOSPHATE SYNTHASE SUBUNIT HISF/H IGP SYNTHASE SUBUNIT HISF/H"/>
    <property type="match status" value="1"/>
</dbReference>
<dbReference type="Pfam" id="PF00977">
    <property type="entry name" value="His_biosynth"/>
    <property type="match status" value="1"/>
</dbReference>
<dbReference type="SUPFAM" id="SSF51366">
    <property type="entry name" value="Ribulose-phoshate binding barrel"/>
    <property type="match status" value="1"/>
</dbReference>
<keyword id="KW-0028">Amino-acid biosynthesis</keyword>
<keyword id="KW-0963">Cytoplasm</keyword>
<keyword id="KW-0368">Histidine biosynthesis</keyword>
<keyword id="KW-0456">Lyase</keyword>
<keyword id="KW-1185">Reference proteome</keyword>
<sequence>MLTKRIIPCLDVKGGRVVKGVQFLELRDAGDPVEIAEIYDRQGADELTFLDITASSDARDIIIDVVRRTAERVFMPLTVGGGVRTVEDIRRLLNAGADKVSINTAAVHRPEFVKEAAERFGSQCTVVAIDARRVPGEDRWEVYTHGGRNATGIDAVEWAQRMEAYGSGEILLTSMDRDGTKDGYDLPLTRAVADAVSIPVIASGGVGNLEHLYDGFTKGGASACLAASIFHYREYTIQEAKEYLRERGVPVRI</sequence>
<organism>
    <name type="scientific">Geotalea uraniireducens (strain Rf4)</name>
    <name type="common">Geobacter uraniireducens</name>
    <dbReference type="NCBI Taxonomy" id="351605"/>
    <lineage>
        <taxon>Bacteria</taxon>
        <taxon>Pseudomonadati</taxon>
        <taxon>Thermodesulfobacteriota</taxon>
        <taxon>Desulfuromonadia</taxon>
        <taxon>Geobacterales</taxon>
        <taxon>Geobacteraceae</taxon>
        <taxon>Geotalea</taxon>
    </lineage>
</organism>
<accession>A5G8S9</accession>
<name>HIS6_GEOUR</name>
<feature type="chain" id="PRO_1000084061" description="Imidazole glycerol phosphate synthase subunit HisF">
    <location>
        <begin position="1"/>
        <end position="253"/>
    </location>
</feature>
<feature type="active site" evidence="1">
    <location>
        <position position="11"/>
    </location>
</feature>
<feature type="active site" evidence="1">
    <location>
        <position position="130"/>
    </location>
</feature>
<comment type="function">
    <text evidence="1">IGPS catalyzes the conversion of PRFAR and glutamine to IGP, AICAR and glutamate. The HisF subunit catalyzes the cyclization activity that produces IGP and AICAR from PRFAR using the ammonia provided by the HisH subunit.</text>
</comment>
<comment type="catalytic activity">
    <reaction evidence="1">
        <text>5-[(5-phospho-1-deoxy-D-ribulos-1-ylimino)methylamino]-1-(5-phospho-beta-D-ribosyl)imidazole-4-carboxamide + L-glutamine = D-erythro-1-(imidazol-4-yl)glycerol 3-phosphate + 5-amino-1-(5-phospho-beta-D-ribosyl)imidazole-4-carboxamide + L-glutamate + H(+)</text>
        <dbReference type="Rhea" id="RHEA:24793"/>
        <dbReference type="ChEBI" id="CHEBI:15378"/>
        <dbReference type="ChEBI" id="CHEBI:29985"/>
        <dbReference type="ChEBI" id="CHEBI:58278"/>
        <dbReference type="ChEBI" id="CHEBI:58359"/>
        <dbReference type="ChEBI" id="CHEBI:58475"/>
        <dbReference type="ChEBI" id="CHEBI:58525"/>
        <dbReference type="EC" id="4.3.2.10"/>
    </reaction>
</comment>
<comment type="pathway">
    <text evidence="1">Amino-acid biosynthesis; L-histidine biosynthesis; L-histidine from 5-phospho-alpha-D-ribose 1-diphosphate: step 5/9.</text>
</comment>
<comment type="subunit">
    <text evidence="1">Heterodimer of HisH and HisF.</text>
</comment>
<comment type="subcellular location">
    <subcellularLocation>
        <location evidence="1">Cytoplasm</location>
    </subcellularLocation>
</comment>
<comment type="similarity">
    <text evidence="1">Belongs to the HisA/HisF family.</text>
</comment>
<proteinExistence type="inferred from homology"/>
<evidence type="ECO:0000255" key="1">
    <source>
        <dbReference type="HAMAP-Rule" id="MF_01013"/>
    </source>
</evidence>
<reference key="1">
    <citation type="submission" date="2007-05" db="EMBL/GenBank/DDBJ databases">
        <title>Complete sequence of Geobacter uraniireducens Rf4.</title>
        <authorList>
            <consortium name="US DOE Joint Genome Institute"/>
            <person name="Copeland A."/>
            <person name="Lucas S."/>
            <person name="Lapidus A."/>
            <person name="Barry K."/>
            <person name="Detter J.C."/>
            <person name="Glavina del Rio T."/>
            <person name="Hammon N."/>
            <person name="Israni S."/>
            <person name="Dalin E."/>
            <person name="Tice H."/>
            <person name="Pitluck S."/>
            <person name="Chertkov O."/>
            <person name="Brettin T."/>
            <person name="Bruce D."/>
            <person name="Han C."/>
            <person name="Schmutz J."/>
            <person name="Larimer F."/>
            <person name="Land M."/>
            <person name="Hauser L."/>
            <person name="Kyrpides N."/>
            <person name="Mikhailova N."/>
            <person name="Shelobolina E."/>
            <person name="Aklujkar M."/>
            <person name="Lovley D."/>
            <person name="Richardson P."/>
        </authorList>
    </citation>
    <scope>NUCLEOTIDE SEQUENCE [LARGE SCALE GENOMIC DNA]</scope>
    <source>
        <strain>ATCC BAA-1134 / JCM 13001 / Rf4</strain>
    </source>
</reference>